<comment type="function">
    <text evidence="1 4">Myosin regulatory subunit that plays an essential role to maintain muscle integrity during early development (By similarity). Plays a role in muscle contraction (By similarity).</text>
</comment>
<comment type="subunit">
    <text evidence="7">Myosin is a hexamer of 2 heavy chains and 4 light chains.</text>
</comment>
<comment type="PTM">
    <text>N,N,N-trimethylalanine found in this myosin light chain would not have been detected in the N-terminal tryptic peptide in PubMed:863872 and PubMed:352892 because it would remain trimethylated and ninhydrin negative after hydrolysis.</text>
</comment>
<comment type="miscellaneous">
    <text>This chain binds one calcium ion.</text>
</comment>
<keyword id="KW-0106">Calcium</keyword>
<keyword id="KW-0903">Direct protein sequencing</keyword>
<keyword id="KW-0479">Metal-binding</keyword>
<keyword id="KW-0488">Methylation</keyword>
<keyword id="KW-0505">Motor protein</keyword>
<keyword id="KW-0514">Muscle protein</keyword>
<keyword id="KW-0518">Myosin</keyword>
<keyword id="KW-0597">Phosphoprotein</keyword>
<keyword id="KW-1185">Reference proteome</keyword>
<keyword id="KW-0677">Repeat</keyword>
<dbReference type="EMBL" id="X54043">
    <property type="protein sequence ID" value="CAA37976.1"/>
    <property type="molecule type" value="mRNA"/>
</dbReference>
<dbReference type="EMBL" id="V00887">
    <property type="protein sequence ID" value="CAA24255.1"/>
    <property type="molecule type" value="mRNA"/>
</dbReference>
<dbReference type="EMBL" id="V00888">
    <property type="protein sequence ID" value="CAA24256.1"/>
    <property type="molecule type" value="mRNA"/>
</dbReference>
<dbReference type="PIR" id="S12691">
    <property type="entry name" value="MORBLD"/>
</dbReference>
<dbReference type="RefSeq" id="NP_001076230.2">
    <property type="nucleotide sequence ID" value="NM_001082761.2"/>
</dbReference>
<dbReference type="SMR" id="P02608"/>
<dbReference type="FunCoup" id="P02608">
    <property type="interactions" value="48"/>
</dbReference>
<dbReference type="STRING" id="9986.ENSOCUP00000015491"/>
<dbReference type="iPTMnet" id="P02608"/>
<dbReference type="PaxDb" id="9986-ENSOCUP00000015491"/>
<dbReference type="GeneID" id="100009542"/>
<dbReference type="CTD" id="29895"/>
<dbReference type="eggNOG" id="KOG0031">
    <property type="taxonomic scope" value="Eukaryota"/>
</dbReference>
<dbReference type="InParanoid" id="P02608"/>
<dbReference type="OrthoDB" id="429467at2759"/>
<dbReference type="Proteomes" id="UP000001811">
    <property type="component" value="Unplaced"/>
</dbReference>
<dbReference type="GO" id="GO:0016459">
    <property type="term" value="C:myosin complex"/>
    <property type="evidence" value="ECO:0007669"/>
    <property type="project" value="UniProtKB-KW"/>
</dbReference>
<dbReference type="GO" id="GO:0005509">
    <property type="term" value="F:calcium ion binding"/>
    <property type="evidence" value="ECO:0007669"/>
    <property type="project" value="InterPro"/>
</dbReference>
<dbReference type="GO" id="GO:0007519">
    <property type="term" value="P:skeletal muscle tissue development"/>
    <property type="evidence" value="ECO:0000250"/>
    <property type="project" value="UniProtKB"/>
</dbReference>
<dbReference type="FunFam" id="1.10.238.10:FF:000010">
    <property type="entry name" value="Myosin regulatory light chain 2, atrial isoform"/>
    <property type="match status" value="1"/>
</dbReference>
<dbReference type="FunFam" id="1.10.238.10:FF:000007">
    <property type="entry name" value="Putative myosin regulatory light chain sqh"/>
    <property type="match status" value="1"/>
</dbReference>
<dbReference type="Gene3D" id="1.10.238.10">
    <property type="entry name" value="EF-hand"/>
    <property type="match status" value="2"/>
</dbReference>
<dbReference type="InterPro" id="IPR011992">
    <property type="entry name" value="EF-hand-dom_pair"/>
</dbReference>
<dbReference type="InterPro" id="IPR018247">
    <property type="entry name" value="EF_Hand_1_Ca_BS"/>
</dbReference>
<dbReference type="InterPro" id="IPR002048">
    <property type="entry name" value="EF_hand_dom"/>
</dbReference>
<dbReference type="InterPro" id="IPR050403">
    <property type="entry name" value="Myosin_RLC"/>
</dbReference>
<dbReference type="PANTHER" id="PTHR23049">
    <property type="entry name" value="MYOSIN REGULATORY LIGHT CHAIN 2"/>
    <property type="match status" value="1"/>
</dbReference>
<dbReference type="Pfam" id="PF13405">
    <property type="entry name" value="EF-hand_6"/>
    <property type="match status" value="1"/>
</dbReference>
<dbReference type="SMART" id="SM00054">
    <property type="entry name" value="EFh"/>
    <property type="match status" value="2"/>
</dbReference>
<dbReference type="SUPFAM" id="SSF47473">
    <property type="entry name" value="EF-hand"/>
    <property type="match status" value="1"/>
</dbReference>
<dbReference type="PROSITE" id="PS00018">
    <property type="entry name" value="EF_HAND_1"/>
    <property type="match status" value="1"/>
</dbReference>
<dbReference type="PROSITE" id="PS50222">
    <property type="entry name" value="EF_HAND_2"/>
    <property type="match status" value="3"/>
</dbReference>
<gene>
    <name type="primary">MYL11</name>
    <name type="synonym">MYLPF</name>
</gene>
<feature type="initiator methionine" description="Removed">
    <location>
        <position position="1"/>
    </location>
</feature>
<feature type="chain" id="PRO_0000198741" description="Myosin regulatory light chain 11">
    <location>
        <begin position="2"/>
        <end position="170"/>
    </location>
</feature>
<feature type="domain" description="EF-hand 1" evidence="5">
    <location>
        <begin position="26"/>
        <end position="61"/>
    </location>
</feature>
<feature type="domain" description="EF-hand 2" evidence="5">
    <location>
        <begin position="96"/>
        <end position="131"/>
    </location>
</feature>
<feature type="domain" description="EF-hand 3" evidence="5">
    <location>
        <begin position="132"/>
        <end position="167"/>
    </location>
</feature>
<feature type="binding site" evidence="5">
    <location>
        <position position="39"/>
    </location>
    <ligand>
        <name>Ca(2+)</name>
        <dbReference type="ChEBI" id="CHEBI:29108"/>
    </ligand>
</feature>
<feature type="binding site" evidence="5">
    <location>
        <position position="41"/>
    </location>
    <ligand>
        <name>Ca(2+)</name>
        <dbReference type="ChEBI" id="CHEBI:29108"/>
    </ligand>
</feature>
<feature type="binding site" evidence="5">
    <location>
        <position position="43"/>
    </location>
    <ligand>
        <name>Ca(2+)</name>
        <dbReference type="ChEBI" id="CHEBI:29108"/>
    </ligand>
</feature>
<feature type="binding site" evidence="5">
    <location>
        <position position="50"/>
    </location>
    <ligand>
        <name>Ca(2+)</name>
        <dbReference type="ChEBI" id="CHEBI:29108"/>
    </ligand>
</feature>
<feature type="modified residue" description="N,N,N-trimethylalanine" evidence="6">
    <location>
        <position position="2"/>
    </location>
</feature>
<feature type="modified residue" description="Phosphoserine" evidence="3">
    <location>
        <position position="16"/>
    </location>
</feature>
<feature type="modified residue" description="Phosphoserine" evidence="3">
    <location>
        <position position="17"/>
    </location>
</feature>
<feature type="modified residue" description="Phosphothreonine" evidence="2">
    <location>
        <position position="26"/>
    </location>
</feature>
<feature type="modified residue" description="Phosphothreonine" evidence="2">
    <location>
        <position position="36"/>
    </location>
</feature>
<feature type="modified residue" description="Phosphoserine" evidence="2">
    <location>
        <position position="76"/>
    </location>
</feature>
<feature type="modified residue" description="Phosphothreonine" evidence="2">
    <location>
        <position position="102"/>
    </location>
</feature>
<organism>
    <name type="scientific">Oryctolagus cuniculus</name>
    <name type="common">Rabbit</name>
    <dbReference type="NCBI Taxonomy" id="9986"/>
    <lineage>
        <taxon>Eukaryota</taxon>
        <taxon>Metazoa</taxon>
        <taxon>Chordata</taxon>
        <taxon>Craniata</taxon>
        <taxon>Vertebrata</taxon>
        <taxon>Euteleostomi</taxon>
        <taxon>Mammalia</taxon>
        <taxon>Eutheria</taxon>
        <taxon>Euarchontoglires</taxon>
        <taxon>Glires</taxon>
        <taxon>Lagomorpha</taxon>
        <taxon>Leporidae</taxon>
        <taxon>Oryctolagus</taxon>
    </lineage>
</organism>
<name>MYL11_RABIT</name>
<sequence>MAPKKAKRRAAAEGGSSNVFSMFDQTQIQEFKEAFTVIDQNRDGIIDKEDLRDTFAAMGRLNVKNEELDAMMKEASGPINFTVFLTMFGEKLKGADPEDVITGAFKVLDPEGKGTIKKQFLEELLTTQCDRFSQEEIKNMWAAFPPDVGGNVDYKNICYVITHGDAKDQE</sequence>
<reference key="1">
    <citation type="journal article" date="1990" name="Nucleic Acids Res.">
        <title>Sequence of two isoforms of myosin light chain 2 isolated from a rabbit fast skeletal muscle lambda library.</title>
        <authorList>
            <person name="Maeda K."/>
            <person name="Mueller-Gerhardt E."/>
            <person name="Wittinghofer A."/>
        </authorList>
    </citation>
    <scope>NUCLEOTIDE SEQUENCE [MRNA]</scope>
</reference>
<reference key="2">
    <citation type="journal article" date="1977" name="J. Biochem.">
        <title>Amino acid sequence of the L-2 light chain of rabbit skeletal muscle myosin.</title>
        <authorList>
            <person name="Matsuda G."/>
            <person name="Maita T."/>
            <person name="Suzuyama Y."/>
            <person name="Setoguchi M."/>
            <person name="Umegane T."/>
        </authorList>
    </citation>
    <scope>PROTEIN SEQUENCE OF 3-170</scope>
</reference>
<reference key="3">
    <citation type="journal article" date="1978" name="Hoppe-Seyler's Z. Physiol. Chem.">
        <title>The amino acid sequences of the tryptic, chymotryptic and peptic peptides from the L-2 light chain of rabbit skeletal muscle myosin.</title>
        <authorList>
            <person name="Matsuda G."/>
            <person name="Maita T."/>
            <person name="Suzuyama Y."/>
            <person name="Setoguchi M."/>
            <person name="Umegane T."/>
        </authorList>
    </citation>
    <scope>PROTEIN SEQUENCE OF 3-170</scope>
</reference>
<reference key="4">
    <citation type="journal article" date="1983" name="Nature">
        <title>A new troponin T and cDNA clones for 13 different muscle proteins, found by shotgun sequencing.</title>
        <authorList>
            <person name="Putney S.D."/>
            <person name="Herlihy W.C."/>
            <person name="Schimmel P.R."/>
        </authorList>
    </citation>
    <scope>NUCLEOTIDE SEQUENCE [MRNA] OF 28-39 AND 113-146</scope>
</reference>
<reference key="5">
    <citation type="journal article" date="1985" name="Eur. J. Biochem.">
        <title>The widespread distribution of alpha-N-trimethylalanine as the N-terminal amino acid of light chains from vertebrate striated muscle myosins.</title>
        <authorList>
            <person name="Henry G.D."/>
            <person name="Trayer I.P."/>
            <person name="Brewer S."/>
            <person name="Levine B.A."/>
        </authorList>
    </citation>
    <scope>METHYLATION AT ALA-2</scope>
</reference>
<accession>P02608</accession>
<proteinExistence type="evidence at protein level"/>
<evidence type="ECO:0000250" key="1">
    <source>
        <dbReference type="UniProtKB" id="O93409"/>
    </source>
</evidence>
<evidence type="ECO:0000250" key="2">
    <source>
        <dbReference type="UniProtKB" id="P04466"/>
    </source>
</evidence>
<evidence type="ECO:0000250" key="3">
    <source>
        <dbReference type="UniProtKB" id="P97457"/>
    </source>
</evidence>
<evidence type="ECO:0000250" key="4">
    <source>
        <dbReference type="UniProtKB" id="Q96A32"/>
    </source>
</evidence>
<evidence type="ECO:0000255" key="5">
    <source>
        <dbReference type="PROSITE-ProRule" id="PRU00448"/>
    </source>
</evidence>
<evidence type="ECO:0000269" key="6">
    <source>
    </source>
</evidence>
<evidence type="ECO:0000305" key="7"/>
<protein>
    <recommendedName>
        <fullName>Myosin regulatory light chain 11</fullName>
    </recommendedName>
    <alternativeName>
        <fullName>DTNB</fullName>
    </alternativeName>
    <alternativeName>
        <fullName>Fast skeletal myosin light chain 2</fullName>
        <shortName>G2</shortName>
        <shortName>MLC-2</shortName>
    </alternativeName>
    <alternativeName>
        <fullName>Myosin light chain 11</fullName>
    </alternativeName>
    <alternativeName>
        <fullName>Myosin regulatory light chain 2, skeletal muscle isoform type 2</fullName>
    </alternativeName>
</protein>